<feature type="chain" id="PRO_1000021952" description="RNA pyrophosphohydrolase">
    <location>
        <begin position="1"/>
        <end position="161"/>
    </location>
</feature>
<feature type="domain" description="Nudix hydrolase" evidence="1">
    <location>
        <begin position="6"/>
        <end position="149"/>
    </location>
</feature>
<feature type="short sequence motif" description="Nudix box">
    <location>
        <begin position="38"/>
        <end position="59"/>
    </location>
</feature>
<dbReference type="EC" id="3.6.1.-" evidence="1"/>
<dbReference type="EMBL" id="CP000155">
    <property type="protein sequence ID" value="ABC32635.1"/>
    <property type="molecule type" value="Genomic_DNA"/>
</dbReference>
<dbReference type="RefSeq" id="WP_011399693.1">
    <property type="nucleotide sequence ID" value="NC_007645.1"/>
</dbReference>
<dbReference type="SMR" id="Q2S9N9"/>
<dbReference type="STRING" id="349521.HCH_05984"/>
<dbReference type="KEGG" id="hch:HCH_05984"/>
<dbReference type="eggNOG" id="COG0494">
    <property type="taxonomic scope" value="Bacteria"/>
</dbReference>
<dbReference type="HOGENOM" id="CLU_087195_3_2_6"/>
<dbReference type="OrthoDB" id="9816040at2"/>
<dbReference type="Proteomes" id="UP000000238">
    <property type="component" value="Chromosome"/>
</dbReference>
<dbReference type="GO" id="GO:0016462">
    <property type="term" value="F:pyrophosphatase activity"/>
    <property type="evidence" value="ECO:0007669"/>
    <property type="project" value="UniProtKB-ARBA"/>
</dbReference>
<dbReference type="CDD" id="cd03671">
    <property type="entry name" value="NUDIX_Ap4A_hydrolase_plant_like"/>
    <property type="match status" value="1"/>
</dbReference>
<dbReference type="FunFam" id="3.90.79.10:FF:000001">
    <property type="entry name" value="RNA pyrophosphohydrolase"/>
    <property type="match status" value="1"/>
</dbReference>
<dbReference type="Gene3D" id="3.90.79.10">
    <property type="entry name" value="Nucleoside Triphosphate Pyrophosphohydrolase"/>
    <property type="match status" value="1"/>
</dbReference>
<dbReference type="HAMAP" id="MF_00298">
    <property type="entry name" value="Nudix_RppH"/>
    <property type="match status" value="1"/>
</dbReference>
<dbReference type="InterPro" id="IPR020476">
    <property type="entry name" value="Nudix_hydrolase"/>
</dbReference>
<dbReference type="InterPro" id="IPR015797">
    <property type="entry name" value="NUDIX_hydrolase-like_dom_sf"/>
</dbReference>
<dbReference type="InterPro" id="IPR020084">
    <property type="entry name" value="NUDIX_hydrolase_CS"/>
</dbReference>
<dbReference type="InterPro" id="IPR000086">
    <property type="entry name" value="NUDIX_hydrolase_dom"/>
</dbReference>
<dbReference type="InterPro" id="IPR022927">
    <property type="entry name" value="RppH"/>
</dbReference>
<dbReference type="NCBIfam" id="NF001934">
    <property type="entry name" value="PRK00714.1-1"/>
    <property type="match status" value="1"/>
</dbReference>
<dbReference type="NCBIfam" id="NF001937">
    <property type="entry name" value="PRK00714.1-4"/>
    <property type="match status" value="1"/>
</dbReference>
<dbReference type="NCBIfam" id="NF001938">
    <property type="entry name" value="PRK00714.1-5"/>
    <property type="match status" value="1"/>
</dbReference>
<dbReference type="PANTHER" id="PTHR43046">
    <property type="entry name" value="GDP-MANNOSE MANNOSYL HYDROLASE"/>
    <property type="match status" value="1"/>
</dbReference>
<dbReference type="PANTHER" id="PTHR43046:SF14">
    <property type="entry name" value="MUTT_NUDIX FAMILY PROTEIN"/>
    <property type="match status" value="1"/>
</dbReference>
<dbReference type="Pfam" id="PF00293">
    <property type="entry name" value="NUDIX"/>
    <property type="match status" value="1"/>
</dbReference>
<dbReference type="PRINTS" id="PR00502">
    <property type="entry name" value="NUDIXFAMILY"/>
</dbReference>
<dbReference type="SUPFAM" id="SSF55811">
    <property type="entry name" value="Nudix"/>
    <property type="match status" value="1"/>
</dbReference>
<dbReference type="PROSITE" id="PS51462">
    <property type="entry name" value="NUDIX"/>
    <property type="match status" value="1"/>
</dbReference>
<dbReference type="PROSITE" id="PS00893">
    <property type="entry name" value="NUDIX_BOX"/>
    <property type="match status" value="1"/>
</dbReference>
<protein>
    <recommendedName>
        <fullName evidence="1">RNA pyrophosphohydrolase</fullName>
        <ecNumber evidence="1">3.6.1.-</ecNumber>
    </recommendedName>
    <alternativeName>
        <fullName evidence="1">(Di)nucleoside polyphosphate hydrolase</fullName>
    </alternativeName>
</protein>
<sequence>MIDAEGYRPNVGIILCNPQGEVFWARRIGQDSWQFPQGGIKKDESPEEALFRELKEEVGLPPEAVEIVAGTRGWLRYRLPKKMIRYDSHPVCVGQKQKWFMLQLLADESEICTNYTDKPEFDGWRWVSYWYPLGQVVSFKREVYRRAMREFAPVLFKREES</sequence>
<evidence type="ECO:0000255" key="1">
    <source>
        <dbReference type="HAMAP-Rule" id="MF_00298"/>
    </source>
</evidence>
<organism>
    <name type="scientific">Hahella chejuensis (strain KCTC 2396)</name>
    <dbReference type="NCBI Taxonomy" id="349521"/>
    <lineage>
        <taxon>Bacteria</taxon>
        <taxon>Pseudomonadati</taxon>
        <taxon>Pseudomonadota</taxon>
        <taxon>Gammaproteobacteria</taxon>
        <taxon>Oceanospirillales</taxon>
        <taxon>Hahellaceae</taxon>
        <taxon>Hahella</taxon>
    </lineage>
</organism>
<proteinExistence type="inferred from homology"/>
<keyword id="KW-0378">Hydrolase</keyword>
<keyword id="KW-1185">Reference proteome</keyword>
<gene>
    <name evidence="1" type="primary">rppH</name>
    <name evidence="1" type="synonym">nudH</name>
    <name type="ordered locus">HCH_05984</name>
</gene>
<reference key="1">
    <citation type="journal article" date="2005" name="Nucleic Acids Res.">
        <title>Genomic blueprint of Hahella chejuensis, a marine microbe producing an algicidal agent.</title>
        <authorList>
            <person name="Jeong H."/>
            <person name="Yim J.H."/>
            <person name="Lee C."/>
            <person name="Choi S.-H."/>
            <person name="Park Y.K."/>
            <person name="Yoon S.H."/>
            <person name="Hur C.-G."/>
            <person name="Kang H.-Y."/>
            <person name="Kim D."/>
            <person name="Lee H.H."/>
            <person name="Park K.H."/>
            <person name="Park S.-H."/>
            <person name="Park H.-S."/>
            <person name="Lee H.K."/>
            <person name="Oh T.K."/>
            <person name="Kim J.F."/>
        </authorList>
    </citation>
    <scope>NUCLEOTIDE SEQUENCE [LARGE SCALE GENOMIC DNA]</scope>
    <source>
        <strain>KCTC 2396</strain>
    </source>
</reference>
<accession>Q2S9N9</accession>
<comment type="function">
    <text evidence="1">Accelerates the degradation of transcripts by removing pyrophosphate from the 5'-end of triphosphorylated RNA, leading to a more labile monophosphorylated state that can stimulate subsequent ribonuclease cleavage.</text>
</comment>
<comment type="cofactor">
    <cofactor evidence="1">
        <name>a divalent metal cation</name>
        <dbReference type="ChEBI" id="CHEBI:60240"/>
    </cofactor>
</comment>
<comment type="similarity">
    <text evidence="1">Belongs to the Nudix hydrolase family. RppH subfamily.</text>
</comment>
<name>RPPH_HAHCH</name>